<protein>
    <recommendedName>
        <fullName evidence="6">Secreted LysM effector Mgx1LysM</fullName>
    </recommendedName>
    <alternativeName>
        <fullName evidence="6">LysM domain-containing protein Mgx1LysM</fullName>
    </alternativeName>
    <alternativeName>
        <fullName evidence="7">One LysM domain-containing protein</fullName>
    </alternativeName>
</protein>
<feature type="signal peptide" evidence="2">
    <location>
        <begin position="1"/>
        <end position="18"/>
    </location>
</feature>
<feature type="chain" id="PRO_5012688356" description="Secreted LysM effector Mgx1LysM">
    <location>
        <begin position="19"/>
        <end position="98"/>
    </location>
</feature>
<feature type="domain" description="LysM" evidence="3">
    <location>
        <begin position="37"/>
        <end position="85"/>
    </location>
</feature>
<feature type="binding site" evidence="1">
    <location>
        <position position="44"/>
    </location>
    <ligand>
        <name>chitin</name>
        <dbReference type="ChEBI" id="CHEBI:17029"/>
    </ligand>
</feature>
<feature type="binding site" evidence="1">
    <location>
        <position position="48"/>
    </location>
    <ligand>
        <name>chitin</name>
        <dbReference type="ChEBI" id="CHEBI:17029"/>
    </ligand>
</feature>
<feature type="binding site" evidence="1">
    <location>
        <position position="75"/>
    </location>
    <ligand>
        <name>chitin</name>
        <dbReference type="ChEBI" id="CHEBI:17029"/>
    </ligand>
</feature>
<feature type="binding site" evidence="1">
    <location>
        <position position="77"/>
    </location>
    <ligand>
        <name>chitin</name>
        <dbReference type="ChEBI" id="CHEBI:17029"/>
    </ligand>
</feature>
<feature type="disulfide bond" evidence="1">
    <location>
        <begin position="31"/>
        <end position="89"/>
    </location>
</feature>
<feature type="disulfide bond" evidence="1">
    <location>
        <begin position="62"/>
        <end position="97"/>
    </location>
</feature>
<proteinExistence type="evidence at protein level"/>
<organism>
    <name type="scientific">Zymoseptoria tritici (strain ST99CH_3D7)</name>
    <dbReference type="NCBI Taxonomy" id="1276538"/>
    <lineage>
        <taxon>Eukaryota</taxon>
        <taxon>Fungi</taxon>
        <taxon>Dikarya</taxon>
        <taxon>Ascomycota</taxon>
        <taxon>Pezizomycotina</taxon>
        <taxon>Dothideomycetes</taxon>
        <taxon>Dothideomycetidae</taxon>
        <taxon>Mycosphaerellales</taxon>
        <taxon>Mycosphaerellaceae</taxon>
        <taxon>Zymoseptoria</taxon>
    </lineage>
</organism>
<comment type="function">
    <text evidence="4 5">Secreted effector that enables the plant pathogenic fungus to manipulate host defenses for successful infection (PubMed:21467214, PubMed:33797163). Binds chitin and suppresses the chitin-induced reactive oxygen species (ROS) burst (PubMed:33797163). Chitin-induced polymerization of homodimers forms a contiguous Mg1LysM highly oligomeric super-complexe that is anchored to the chitin in the fungal cell wall to prevent hydrolysis by host chitinases (PubMed:33797163).</text>
</comment>
<comment type="subunit">
    <text evidence="1 5">Forms homodimers in a chitin-independent manner through interactions at the N-termini of Mgx1LysM monomers (PubMed:33797163). Homodimers are further polymerized in a chitin-dependent manner (By similarity).</text>
</comment>
<comment type="subcellular location">
    <subcellularLocation>
        <location evidence="1">Secreted</location>
    </subcellularLocation>
    <subcellularLocation>
        <location evidence="1">Secreted</location>
        <location evidence="1">Cell wall</location>
    </subcellularLocation>
</comment>
<comment type="induction">
    <text evidence="5">Expression is up-regulated during wheat colonization.</text>
</comment>
<comment type="domain">
    <text evidence="4 5">The LysM (lysin motif) domains are small globular domains involved in binding chitin in eukaryotes. Mgx1LysM contains one LysM domain.</text>
</comment>
<comment type="disruption phenotype">
    <text evidence="5">Produces no to only a few pycnidia.</text>
</comment>
<comment type="miscellaneous">
    <text evidence="8">In plants, chitin acts as a microbe-associated molecular pattern (MAMP) that is recognized by lysin motif (LysM)-containing plant cell surface-localized pattern recognition receptors (PRRs) that activate a plethora of downstream immune responses.</text>
</comment>
<comment type="similarity">
    <text evidence="8">Belongs to the secreted LysM effector family.</text>
</comment>
<evidence type="ECO:0000250" key="1">
    <source>
        <dbReference type="UniProtKB" id="F9XHX3"/>
    </source>
</evidence>
<evidence type="ECO:0000255" key="2"/>
<evidence type="ECO:0000255" key="3">
    <source>
        <dbReference type="PROSITE-ProRule" id="PRU01118"/>
    </source>
</evidence>
<evidence type="ECO:0000269" key="4">
    <source>
    </source>
</evidence>
<evidence type="ECO:0000269" key="5">
    <source>
    </source>
</evidence>
<evidence type="ECO:0000303" key="6">
    <source>
    </source>
</evidence>
<evidence type="ECO:0000303" key="7">
    <source>
    </source>
</evidence>
<evidence type="ECO:0000305" key="8"/>
<dbReference type="EMBL" id="LT853699">
    <property type="protein sequence ID" value="SMQ53411.1"/>
    <property type="molecule type" value="Genomic_DNA"/>
</dbReference>
<dbReference type="SMR" id="A0A1X7S1V5"/>
<dbReference type="Proteomes" id="UP000215127">
    <property type="component" value="Chromosome 8"/>
</dbReference>
<dbReference type="GO" id="GO:0005576">
    <property type="term" value="C:extracellular region"/>
    <property type="evidence" value="ECO:0007669"/>
    <property type="project" value="UniProtKB-SubCell"/>
</dbReference>
<dbReference type="CDD" id="cd00118">
    <property type="entry name" value="LysM"/>
    <property type="match status" value="1"/>
</dbReference>
<dbReference type="Gene3D" id="3.10.350.10">
    <property type="entry name" value="LysM domain"/>
    <property type="match status" value="1"/>
</dbReference>
<dbReference type="InterPro" id="IPR018392">
    <property type="entry name" value="LysM_dom"/>
</dbReference>
<dbReference type="InterPro" id="IPR036779">
    <property type="entry name" value="LysM_dom_sf"/>
</dbReference>
<dbReference type="Pfam" id="PF01476">
    <property type="entry name" value="LysM"/>
    <property type="match status" value="1"/>
</dbReference>
<dbReference type="SMART" id="SM00257">
    <property type="entry name" value="LysM"/>
    <property type="match status" value="1"/>
</dbReference>
<dbReference type="SUPFAM" id="SSF54106">
    <property type="entry name" value="LysM domain"/>
    <property type="match status" value="1"/>
</dbReference>
<dbReference type="PROSITE" id="PS51782">
    <property type="entry name" value="LYSM"/>
    <property type="match status" value="1"/>
</dbReference>
<gene>
    <name evidence="7" type="primary">Mgx1LysM</name>
    <name evidence="6" type="synonym">MgxLysM</name>
    <name type="ORF">ZT3D7_G8564</name>
</gene>
<name>LYSMX_ZYMT9</name>
<sequence length="98" mass="10605">MKVTTIIAALLSVAVVDAQNNAQCRKLGLPCHATKTIPYVVKKGDTLTHIAHDIYKRKVGICDLAYTNHIGKNPNLIYAGQTLLIPTDCKTIDDGSCL</sequence>
<accession>A0A1X7S1V5</accession>
<keyword id="KW-0134">Cell wall</keyword>
<keyword id="KW-1015">Disulfide bond</keyword>
<keyword id="KW-1185">Reference proteome</keyword>
<keyword id="KW-0964">Secreted</keyword>
<keyword id="KW-0732">Signal</keyword>
<reference key="1">
    <citation type="journal article" date="2018" name="BMC Biol.">
        <title>Pangenome analyses of the wheat pathogen Zymoseptoria tritici reveal the structural basis of a highly plastic eukaryotic genome.</title>
        <authorList>
            <person name="Plissonneau C."/>
            <person name="Hartmann F.E."/>
            <person name="Croll D."/>
        </authorList>
    </citation>
    <scope>NUCLEOTIDE SEQUENCE [LARGE SCALE GENOMIC DNA]</scope>
</reference>
<reference key="2">
    <citation type="journal article" date="2011" name="Plant Physiol.">
        <title>Analysis of two in planta expressed LysM effector homologs from the fungus Mycosphaerella graminicola reveals novel functional properties and varying contributions to virulence on wheat.</title>
        <authorList>
            <person name="Marshall R."/>
            <person name="Kombrink A."/>
            <person name="Motteram J."/>
            <person name="Loza-Reyes E."/>
            <person name="Lucas J."/>
            <person name="Hammond-Kosack K.E."/>
            <person name="Thomma B.P."/>
            <person name="Rudd J.J."/>
        </authorList>
    </citation>
    <scope>IDENTIFICATION</scope>
    <scope>DOMAIN</scope>
    <source>
        <strain>CBS 115943 / IPO323</strain>
    </source>
</reference>
<reference key="3">
    <citation type="journal article" date="2021" name="Mol. Plant Pathol.">
        <title>Three LysM effectors of Zymoseptoria tritici collectively disarm chitin-triggered plant immunity.</title>
        <authorList>
            <person name="Tian H."/>
            <person name="MacKenzie C.I."/>
            <person name="Rodriguez-Moreno L."/>
            <person name="van den Berg G.C.M."/>
            <person name="Chen H."/>
            <person name="Rudd J.J."/>
            <person name="Mesters J.R."/>
            <person name="Thomma B.P.H.J."/>
        </authorList>
    </citation>
    <scope>FUNCTION</scope>
    <scope>DISRUPTION PHENOTYPE</scope>
    <scope>CHITIN-BINDING</scope>
    <scope>SUBUNIT</scope>
    <scope>DOMAIN</scope>
    <source>
        <strain>CBS 115943 / IPO323</strain>
    </source>
</reference>